<dbReference type="EMBL" id="AY720703">
    <property type="protein sequence ID" value="AAV30510.1"/>
    <property type="molecule type" value="Genomic_DNA"/>
</dbReference>
<dbReference type="EMBL" id="AY720704">
    <property type="protein sequence ID" value="AAV30511.1"/>
    <property type="molecule type" value="Genomic_DNA"/>
</dbReference>
<dbReference type="SMR" id="Q5UJG3"/>
<dbReference type="GlyCosmos" id="Q5UJG3">
    <property type="glycosylation" value="2 sites, No reported glycans"/>
</dbReference>
<dbReference type="GO" id="GO:0005794">
    <property type="term" value="C:Golgi apparatus"/>
    <property type="evidence" value="ECO:0007669"/>
    <property type="project" value="UniProtKB-SubCell"/>
</dbReference>
<dbReference type="GO" id="GO:0005886">
    <property type="term" value="C:plasma membrane"/>
    <property type="evidence" value="ECO:0007669"/>
    <property type="project" value="UniProtKB-SubCell"/>
</dbReference>
<dbReference type="GO" id="GO:0098552">
    <property type="term" value="C:side of membrane"/>
    <property type="evidence" value="ECO:0007669"/>
    <property type="project" value="UniProtKB-KW"/>
</dbReference>
<dbReference type="GO" id="GO:0005507">
    <property type="term" value="F:copper ion binding"/>
    <property type="evidence" value="ECO:0000250"/>
    <property type="project" value="UniProtKB"/>
</dbReference>
<dbReference type="GO" id="GO:0051260">
    <property type="term" value="P:protein homooligomerization"/>
    <property type="evidence" value="ECO:0007669"/>
    <property type="project" value="InterPro"/>
</dbReference>
<dbReference type="FunFam" id="1.10.790.10:FF:000001">
    <property type="entry name" value="Major prion protein"/>
    <property type="match status" value="1"/>
</dbReference>
<dbReference type="Gene3D" id="1.10.790.10">
    <property type="entry name" value="Prion/Doppel protein, beta-ribbon domain"/>
    <property type="match status" value="1"/>
</dbReference>
<dbReference type="InterPro" id="IPR000817">
    <property type="entry name" value="Prion"/>
</dbReference>
<dbReference type="InterPro" id="IPR036924">
    <property type="entry name" value="Prion/Doppel_b-ribbon_dom_sf"/>
</dbReference>
<dbReference type="InterPro" id="IPR022416">
    <property type="entry name" value="Prion/Doppel_prot_b-ribbon_dom"/>
</dbReference>
<dbReference type="InterPro" id="IPR020949">
    <property type="entry name" value="Prion_copper_b_octapeptide"/>
</dbReference>
<dbReference type="InterPro" id="IPR025860">
    <property type="entry name" value="Prion_N"/>
</dbReference>
<dbReference type="PANTHER" id="PTHR15506">
    <property type="entry name" value="DOPPEL PRION"/>
    <property type="match status" value="1"/>
</dbReference>
<dbReference type="PANTHER" id="PTHR15506:SF2">
    <property type="entry name" value="MAJOR PRION PROTEIN"/>
    <property type="match status" value="1"/>
</dbReference>
<dbReference type="Pfam" id="PF00377">
    <property type="entry name" value="Prion"/>
    <property type="match status" value="1"/>
</dbReference>
<dbReference type="Pfam" id="PF11587">
    <property type="entry name" value="Prion_bPrPp"/>
    <property type="match status" value="1"/>
</dbReference>
<dbReference type="Pfam" id="PF03991">
    <property type="entry name" value="Prion_octapep"/>
    <property type="match status" value="1"/>
</dbReference>
<dbReference type="PRINTS" id="PR00341">
    <property type="entry name" value="PRION"/>
</dbReference>
<dbReference type="SMART" id="SM00157">
    <property type="entry name" value="PRP"/>
    <property type="match status" value="1"/>
</dbReference>
<dbReference type="SUPFAM" id="SSF54098">
    <property type="entry name" value="Prion-like"/>
    <property type="match status" value="1"/>
</dbReference>
<dbReference type="PROSITE" id="PS00291">
    <property type="entry name" value="PRION_1"/>
    <property type="match status" value="1"/>
</dbReference>
<dbReference type="PROSITE" id="PS00706">
    <property type="entry name" value="PRION_2"/>
    <property type="match status" value="1"/>
</dbReference>
<organism>
    <name type="scientific">Tragelaphus imberbis</name>
    <name type="common">Lesser kudu</name>
    <dbReference type="NCBI Taxonomy" id="9947"/>
    <lineage>
        <taxon>Eukaryota</taxon>
        <taxon>Metazoa</taxon>
        <taxon>Chordata</taxon>
        <taxon>Craniata</taxon>
        <taxon>Vertebrata</taxon>
        <taxon>Euteleostomi</taxon>
        <taxon>Mammalia</taxon>
        <taxon>Eutheria</taxon>
        <taxon>Laurasiatheria</taxon>
        <taxon>Artiodactyla</taxon>
        <taxon>Ruminantia</taxon>
        <taxon>Pecora</taxon>
        <taxon>Bovidae</taxon>
        <taxon>Bovinae</taxon>
        <taxon>Tragelaphus</taxon>
    </lineage>
</organism>
<gene>
    <name type="primary">PRNP</name>
    <name type="synonym">PRP</name>
</gene>
<feature type="signal peptide" evidence="1">
    <location>
        <begin position="1"/>
        <end position="24"/>
    </location>
</feature>
<feature type="chain" id="PRO_0000025733" description="Major prion protein">
    <location>
        <begin position="25"/>
        <end position="241"/>
    </location>
</feature>
<feature type="propeptide" id="PRO_0000025734" description="Removed in mature form" evidence="5">
    <location>
        <begin position="242"/>
        <end position="264"/>
    </location>
</feature>
<feature type="repeat" description="1">
    <location>
        <begin position="54"/>
        <end position="62"/>
    </location>
</feature>
<feature type="repeat" description="2">
    <location>
        <begin position="63"/>
        <end position="70"/>
    </location>
</feature>
<feature type="repeat" description="3">
    <location>
        <begin position="71"/>
        <end position="78"/>
    </location>
</feature>
<feature type="repeat" description="4">
    <location>
        <begin position="79"/>
        <end position="86"/>
    </location>
</feature>
<feature type="repeat" description="5">
    <location>
        <begin position="87"/>
        <end position="94"/>
    </location>
</feature>
<feature type="repeat" description="6">
    <location>
        <begin position="95"/>
        <end position="103"/>
    </location>
</feature>
<feature type="region of interest" description="Interaction with GRB2, ERI3 and SYN1" evidence="4">
    <location>
        <begin position="25"/>
        <end position="241"/>
    </location>
</feature>
<feature type="region of interest" description="Disordered" evidence="6">
    <location>
        <begin position="28"/>
        <end position="118"/>
    </location>
</feature>
<feature type="region of interest" description="6 X 8 AA tandem repeats of P-H-G-G-G-W-G-Q">
    <location>
        <begin position="54"/>
        <end position="103"/>
    </location>
</feature>
<feature type="compositionally biased region" description="Gly residues" evidence="6">
    <location>
        <begin position="55"/>
        <end position="107"/>
    </location>
</feature>
<feature type="binding site" evidence="2">
    <location>
        <position position="72"/>
    </location>
    <ligand>
        <name>Cu(2+)</name>
        <dbReference type="ChEBI" id="CHEBI:29036"/>
        <label>1</label>
    </ligand>
</feature>
<feature type="binding site" evidence="2">
    <location>
        <position position="73"/>
    </location>
    <ligand>
        <name>Cu(2+)</name>
        <dbReference type="ChEBI" id="CHEBI:29036"/>
        <label>1</label>
    </ligand>
</feature>
<feature type="binding site" evidence="2">
    <location>
        <position position="74"/>
    </location>
    <ligand>
        <name>Cu(2+)</name>
        <dbReference type="ChEBI" id="CHEBI:29036"/>
        <label>1</label>
    </ligand>
</feature>
<feature type="binding site" evidence="2">
    <location>
        <position position="80"/>
    </location>
    <ligand>
        <name>Cu(2+)</name>
        <dbReference type="ChEBI" id="CHEBI:29036"/>
        <label>2</label>
    </ligand>
</feature>
<feature type="binding site" evidence="2">
    <location>
        <position position="81"/>
    </location>
    <ligand>
        <name>Cu(2+)</name>
        <dbReference type="ChEBI" id="CHEBI:29036"/>
        <label>2</label>
    </ligand>
</feature>
<feature type="binding site" evidence="2">
    <location>
        <position position="82"/>
    </location>
    <ligand>
        <name>Cu(2+)</name>
        <dbReference type="ChEBI" id="CHEBI:29036"/>
        <label>2</label>
    </ligand>
</feature>
<feature type="binding site" evidence="2">
    <location>
        <position position="88"/>
    </location>
    <ligand>
        <name>Cu(2+)</name>
        <dbReference type="ChEBI" id="CHEBI:29036"/>
        <label>3</label>
    </ligand>
</feature>
<feature type="binding site" evidence="2">
    <location>
        <position position="89"/>
    </location>
    <ligand>
        <name>Cu(2+)</name>
        <dbReference type="ChEBI" id="CHEBI:29036"/>
        <label>3</label>
    </ligand>
</feature>
<feature type="binding site" evidence="2">
    <location>
        <position position="90"/>
    </location>
    <ligand>
        <name>Cu(2+)</name>
        <dbReference type="ChEBI" id="CHEBI:29036"/>
        <label>3</label>
    </ligand>
</feature>
<feature type="binding site" evidence="2">
    <location>
        <position position="96"/>
    </location>
    <ligand>
        <name>Cu(2+)</name>
        <dbReference type="ChEBI" id="CHEBI:29036"/>
        <label>4</label>
    </ligand>
</feature>
<feature type="binding site" evidence="2">
    <location>
        <position position="98"/>
    </location>
    <ligand>
        <name>Cu(2+)</name>
        <dbReference type="ChEBI" id="CHEBI:29036"/>
        <label>4</label>
    </ligand>
</feature>
<feature type="binding site" evidence="2">
    <location>
        <position position="99"/>
    </location>
    <ligand>
        <name>Cu(2+)</name>
        <dbReference type="ChEBI" id="CHEBI:29036"/>
        <label>4</label>
    </ligand>
</feature>
<feature type="lipid moiety-binding region" description="GPI-anchor amidated alanine" evidence="5">
    <location>
        <position position="241"/>
    </location>
</feature>
<feature type="glycosylation site" description="N-linked (GlcNAc...) asparagine" evidence="5">
    <location>
        <position position="192"/>
    </location>
</feature>
<feature type="glycosylation site" description="N-linked (GlcNAc...) asparagine" evidence="5">
    <location>
        <position position="208"/>
    </location>
</feature>
<feature type="disulfide bond" evidence="3">
    <location>
        <begin position="190"/>
        <end position="225"/>
    </location>
</feature>
<name>PRIO_TRAIM</name>
<proteinExistence type="inferred from homology"/>
<sequence>MVKSHIGSWILVLFVAMWSDVGLCKKRPKPGGGWNTGGSRYPGQGSPGGNRYPSQGGGGWGQPHGGGWGQPHGGGWGQPHGGGWGQPHGGGWGQPHGGGGWGQGGTHGQWNKPSKPKTNMKHVAGAAAAGAVVGGLGGYMLGSAMSRPLIHFGNDYEDRYYRENMYRYPNQVYYRPVDQYSNQNNFVHDCVNITVKQHTVTTTTKGENFTETDIKMMERVVEQMCITQYQRESEAYYQRGASVILFSSPPVILLISFLIFLIVG</sequence>
<evidence type="ECO:0000250" key="1"/>
<evidence type="ECO:0000250" key="2">
    <source>
        <dbReference type="UniProtKB" id="P04156"/>
    </source>
</evidence>
<evidence type="ECO:0000250" key="3">
    <source>
        <dbReference type="UniProtKB" id="P04273"/>
    </source>
</evidence>
<evidence type="ECO:0000250" key="4">
    <source>
        <dbReference type="UniProtKB" id="P04925"/>
    </source>
</evidence>
<evidence type="ECO:0000255" key="5"/>
<evidence type="ECO:0000256" key="6">
    <source>
        <dbReference type="SAM" id="MobiDB-lite"/>
    </source>
</evidence>
<evidence type="ECO:0000305" key="7"/>
<protein>
    <recommendedName>
        <fullName>Major prion protein</fullName>
        <shortName>PrP</shortName>
    </recommendedName>
    <cdAntigenName>CD230</cdAntigenName>
</protein>
<reference key="1">
    <citation type="journal article" date="2004" name="Proc. Natl. Acad. Sci. U.S.A.">
        <title>Prion protein gene (PRNP) variants and evidence for strong purifying selection in functionally important regions of bovine exon 3.</title>
        <authorList>
            <person name="Seabury C.M."/>
            <person name="Honeycutt R.L."/>
            <person name="Rooney A.P."/>
            <person name="Halbert N.D."/>
            <person name="Derr J.N."/>
        </authorList>
    </citation>
    <scope>NUCLEOTIDE SEQUENCE [GENOMIC DNA]</scope>
    <source>
        <strain>Isolate Z14HomoA</strain>
        <strain>Isolate Z14HomoB</strain>
    </source>
</reference>
<accession>Q5UJG3</accession>
<keyword id="KW-0034">Amyloid</keyword>
<keyword id="KW-1003">Cell membrane</keyword>
<keyword id="KW-0186">Copper</keyword>
<keyword id="KW-1015">Disulfide bond</keyword>
<keyword id="KW-0325">Glycoprotein</keyword>
<keyword id="KW-0333">Golgi apparatus</keyword>
<keyword id="KW-0336">GPI-anchor</keyword>
<keyword id="KW-0449">Lipoprotein</keyword>
<keyword id="KW-0472">Membrane</keyword>
<keyword id="KW-0479">Metal-binding</keyword>
<keyword id="KW-0640">Prion</keyword>
<keyword id="KW-0677">Repeat</keyword>
<keyword id="KW-0732">Signal</keyword>
<keyword id="KW-0862">Zinc</keyword>
<comment type="function">
    <text evidence="2 4">Its primary physiological function is unclear. Has cytoprotective activity against internal or environmental stresses. May play a role in neuronal development and synaptic plasticity. May be required for neuronal myelin sheath maintenance. May play a role in iron uptake and iron homeostasis. Soluble oligomers are toxic to cultured neuroblastoma cells and induce apoptosis (in vitro). Association with GPC1 (via its heparan sulfate chains) targets PRNP to lipid rafts. Also provides Cu(2+) or Zn(2+) for the ascorbate-mediated GPC1 deaminase degradation of its heparan sulfate side chains (By similarity).</text>
</comment>
<comment type="subunit">
    <text evidence="2 4">Monomer and homodimer. Has a tendency to aggregate into amyloid fibrils containing a cross-beta spine, formed by a steric zipper of superposed beta-strands. Soluble oligomers may represent an intermediate stage on the path to fibril formation. Copper binding may promote oligomerization. Interacts with GRB2, APP, ERI3/PRNPIP and SYN1. Mislocalized cytosolically exposed PrP interacts with MGRN1; this interaction alters MGRN1 subcellular location and causes lysosomal enlargement. Interacts with KIAA1191.</text>
</comment>
<comment type="subcellular location">
    <subcellularLocation>
        <location evidence="2">Cell membrane</location>
        <topology evidence="2">Lipid-anchor</topology>
        <topology evidence="2">GPI-anchor</topology>
    </subcellularLocation>
    <subcellularLocation>
        <location evidence="4">Golgi apparatus</location>
    </subcellularLocation>
    <text evidence="2">Targeted to lipid rafts via association with the heparan sulfate chains of GPC1. Colocates, in the presence of Cu(2+), to vesicles in para- and perinuclear regions, where both proteins undergo internalization. Heparin displaces PRNP from lipid rafts and promotes endocytosis.</text>
</comment>
<comment type="domain">
    <text evidence="2">The normal, monomeric form has a mainly alpha-helical structure. The disease-associated, protease-resistant form forms amyloid fibrils containing a cross-beta spine, formed by a steric zipper of superposed beta-strands. Disease mutations may favor intermolecular contacts via short beta strands, and may thereby trigger oligomerization.</text>
</comment>
<comment type="domain">
    <text evidence="2">Contains an N-terminal region composed of octamer repeats. At low copper concentrations, the sidechains of His residues from three or four repeats contribute to the binding of a single copper ion. Alternatively, a copper ion can be bound by interaction with the sidechain and backbone amide nitrogen of a single His residue. The observed copper binding stoichiometry suggests that two repeat regions cooperate to stabilize the binding of a single copper ion. At higher copper concentrations, each octamer can bind one copper ion by interactions with the His sidechain and Gly backbone atoms. A mixture of binding types may occur, especially in the case of octamer repeat expansion. Copper binding may stabilize the conformation of this region and may promote oligomerization.</text>
</comment>
<comment type="disease">
    <text evidence="7">Variations in PRNP are responsible of transmissible bovine spongiform encephalopathies (BSE), a class of neurodegenerative diseases that affect various mammals. These diseases are caused by abnormally folded prion proteins. BSE can be subdivided into at least three groups: classical, H-type and L-type, with the latter 2 collectively referred to as atypical BSE. Susceptibility or resistance to a BSE disease can be influenced by at least 3 factors related to the host prion protein: protein expression levels, number of octapeptide repeats, and specific polymorphisms. In cattle, as in humans, BSEs can occur as infectious, spontaneous and genetic diseases.</text>
</comment>
<comment type="similarity">
    <text evidence="7">Belongs to the prion family.</text>
</comment>